<sequence length="244" mass="27663">MEIVSMREMLKAGVHFGHQTRYWNPKMKPFIFGIRNRVHIINLEKTLPMFHFALSELKKIALKKGRILFVGTKKAASKGIKEVAINCEQFYVNHRWLGGMLTNWKTVRQSIKRLKDLEIESKDGTFSKLTKKEALIRSRELFKLENSLGGIKNMGGLPDCLFVIDAAHENIAITEANNLGIPVFSIVDTNSNPDGVDYIIPGNDDAIRSVNLYLKSIMLTISKINNQNSLDKVFIDTKNSTNIE</sequence>
<feature type="chain" id="PRO_1000194325" description="Small ribosomal subunit protein uS2">
    <location>
        <begin position="1"/>
        <end position="244"/>
    </location>
</feature>
<dbReference type="EMBL" id="CP001158">
    <property type="protein sequence ID" value="ACL30047.1"/>
    <property type="molecule type" value="Genomic_DNA"/>
</dbReference>
<dbReference type="RefSeq" id="WP_009874187.1">
    <property type="nucleotide sequence ID" value="NC_011834.1"/>
</dbReference>
<dbReference type="SMR" id="B8D7D2"/>
<dbReference type="KEGG" id="bau:BUAPTUC7_228"/>
<dbReference type="HOGENOM" id="CLU_040318_1_0_6"/>
<dbReference type="GO" id="GO:0022627">
    <property type="term" value="C:cytosolic small ribosomal subunit"/>
    <property type="evidence" value="ECO:0007669"/>
    <property type="project" value="TreeGrafter"/>
</dbReference>
<dbReference type="GO" id="GO:0003735">
    <property type="term" value="F:structural constituent of ribosome"/>
    <property type="evidence" value="ECO:0007669"/>
    <property type="project" value="InterPro"/>
</dbReference>
<dbReference type="GO" id="GO:0006412">
    <property type="term" value="P:translation"/>
    <property type="evidence" value="ECO:0007669"/>
    <property type="project" value="UniProtKB-UniRule"/>
</dbReference>
<dbReference type="CDD" id="cd01425">
    <property type="entry name" value="RPS2"/>
    <property type="match status" value="1"/>
</dbReference>
<dbReference type="FunFam" id="1.10.287.610:FF:000001">
    <property type="entry name" value="30S ribosomal protein S2"/>
    <property type="match status" value="1"/>
</dbReference>
<dbReference type="Gene3D" id="3.40.50.10490">
    <property type="entry name" value="Glucose-6-phosphate isomerase like protein, domain 1"/>
    <property type="match status" value="1"/>
</dbReference>
<dbReference type="Gene3D" id="1.10.287.610">
    <property type="entry name" value="Helix hairpin bin"/>
    <property type="match status" value="1"/>
</dbReference>
<dbReference type="HAMAP" id="MF_00291_B">
    <property type="entry name" value="Ribosomal_uS2_B"/>
    <property type="match status" value="1"/>
</dbReference>
<dbReference type="InterPro" id="IPR001865">
    <property type="entry name" value="Ribosomal_uS2"/>
</dbReference>
<dbReference type="InterPro" id="IPR005706">
    <property type="entry name" value="Ribosomal_uS2_bac/mit/plastid"/>
</dbReference>
<dbReference type="InterPro" id="IPR018130">
    <property type="entry name" value="Ribosomal_uS2_CS"/>
</dbReference>
<dbReference type="InterPro" id="IPR023591">
    <property type="entry name" value="Ribosomal_uS2_flav_dom_sf"/>
</dbReference>
<dbReference type="NCBIfam" id="TIGR01011">
    <property type="entry name" value="rpsB_bact"/>
    <property type="match status" value="1"/>
</dbReference>
<dbReference type="PANTHER" id="PTHR12534">
    <property type="entry name" value="30S RIBOSOMAL PROTEIN S2 PROKARYOTIC AND ORGANELLAR"/>
    <property type="match status" value="1"/>
</dbReference>
<dbReference type="PANTHER" id="PTHR12534:SF0">
    <property type="entry name" value="SMALL RIBOSOMAL SUBUNIT PROTEIN US2M"/>
    <property type="match status" value="1"/>
</dbReference>
<dbReference type="Pfam" id="PF00318">
    <property type="entry name" value="Ribosomal_S2"/>
    <property type="match status" value="1"/>
</dbReference>
<dbReference type="PRINTS" id="PR00395">
    <property type="entry name" value="RIBOSOMALS2"/>
</dbReference>
<dbReference type="SUPFAM" id="SSF52313">
    <property type="entry name" value="Ribosomal protein S2"/>
    <property type="match status" value="1"/>
</dbReference>
<dbReference type="PROSITE" id="PS00962">
    <property type="entry name" value="RIBOSOMAL_S2_1"/>
    <property type="match status" value="1"/>
</dbReference>
<dbReference type="PROSITE" id="PS00963">
    <property type="entry name" value="RIBOSOMAL_S2_2"/>
    <property type="match status" value="1"/>
</dbReference>
<organism>
    <name type="scientific">Buchnera aphidicola subsp. Acyrthosiphon pisum (strain Tuc7)</name>
    <dbReference type="NCBI Taxonomy" id="561501"/>
    <lineage>
        <taxon>Bacteria</taxon>
        <taxon>Pseudomonadati</taxon>
        <taxon>Pseudomonadota</taxon>
        <taxon>Gammaproteobacteria</taxon>
        <taxon>Enterobacterales</taxon>
        <taxon>Erwiniaceae</taxon>
        <taxon>Buchnera</taxon>
    </lineage>
</organism>
<keyword id="KW-0687">Ribonucleoprotein</keyword>
<keyword id="KW-0689">Ribosomal protein</keyword>
<protein>
    <recommendedName>
        <fullName evidence="1">Small ribosomal subunit protein uS2</fullName>
    </recommendedName>
    <alternativeName>
        <fullName evidence="2">30S ribosomal protein S2</fullName>
    </alternativeName>
</protein>
<evidence type="ECO:0000255" key="1">
    <source>
        <dbReference type="HAMAP-Rule" id="MF_00291"/>
    </source>
</evidence>
<evidence type="ECO:0000305" key="2"/>
<comment type="similarity">
    <text evidence="1">Belongs to the universal ribosomal protein uS2 family.</text>
</comment>
<reference key="1">
    <citation type="journal article" date="2009" name="Science">
        <title>The dynamics and time scale of ongoing genomic erosion in symbiotic bacteria.</title>
        <authorList>
            <person name="Moran N.A."/>
            <person name="McLaughlin H.J."/>
            <person name="Sorek R."/>
        </authorList>
    </citation>
    <scope>NUCLEOTIDE SEQUENCE [LARGE SCALE GENOMIC DNA]</scope>
    <source>
        <strain>Tuc7</strain>
    </source>
</reference>
<accession>B8D7D2</accession>
<name>RS2_BUCAT</name>
<gene>
    <name evidence="1" type="primary">rpsB</name>
    <name type="ordered locus">BUAPTUC7_228</name>
</gene>
<proteinExistence type="inferred from homology"/>